<comment type="function">
    <text evidence="1">Catalyzes the attachment of valine to tRNA(Val). As ValRS can inadvertently accommodate and process structurally similar amino acids such as threonine, to avoid such errors, it has a 'posttransfer' editing activity that hydrolyzes mischarged Thr-tRNA(Val) in a tRNA-dependent manner (By similarity).</text>
</comment>
<comment type="catalytic activity">
    <reaction>
        <text>tRNA(Val) + L-valine + ATP = L-valyl-tRNA(Val) + AMP + diphosphate</text>
        <dbReference type="Rhea" id="RHEA:10704"/>
        <dbReference type="Rhea" id="RHEA-COMP:9672"/>
        <dbReference type="Rhea" id="RHEA-COMP:9708"/>
        <dbReference type="ChEBI" id="CHEBI:30616"/>
        <dbReference type="ChEBI" id="CHEBI:33019"/>
        <dbReference type="ChEBI" id="CHEBI:57762"/>
        <dbReference type="ChEBI" id="CHEBI:78442"/>
        <dbReference type="ChEBI" id="CHEBI:78537"/>
        <dbReference type="ChEBI" id="CHEBI:456215"/>
        <dbReference type="EC" id="6.1.1.9"/>
    </reaction>
</comment>
<comment type="subcellular location">
    <subcellularLocation>
        <location evidence="1">Cytoplasm</location>
    </subcellularLocation>
</comment>
<comment type="domain">
    <text evidence="1">ValRS has two distinct active sites: one for aminoacylation and one for editing. The misactivated threonine is translocated from the active site to the editing site (By similarity).</text>
</comment>
<comment type="similarity">
    <text evidence="2">Belongs to the class-I aminoacyl-tRNA synthetase family. ValS type 2 subfamily.</text>
</comment>
<sequence length="799" mass="93224">MAHRLPTRWDIKWEEELLKLWEKEGRFKTKISGSRPVFVIDTPPPYLSSNRPHIGQTASYAHFDMIARFLRMRGVDVIFPFYLDRNGLPIEVQVEKKYGVVAHEIPREKFIKMCKEELDSYEGEFVSSLRRWGLSFDYWPNGTDSPEYRRMTQKTFIELWHKGLVYEAERPTPWCPRCRTALAEPEIEYREEETYLNYIKFKVKETGEDIIIATTRPELLPATVAVIFHPDDSRYTRLNGMHAVVPPEGQVVPILPHKAANPNFGSGLVMISTFGDTRDLMIVNELKLPIRIIIDEGGRIKTGKYAGVSIREARAKIIEDLKNAGLLVKQERLVHNVPVCWRCKTPLEIIVTRELFIKQIEFKEKLIELAGKMEFKPPEYRQVLIDWIKSLELDWPVSRRRYYATEIPIWWCAKPNGERVPLLPKGGEYYVPWRDEPPPEVKEACKDGRLEGDTRVFDTWFDSSISWMYASGVTKDFNAFSKVYPHSIMRPQGYDIIRTWLYYSLLRAYLLYGDVPFRYVRINGMGLDEKGEAMHKSKGNVIDLLAPVEKYGADPVRFWAAAAGRLGTDYRYNENVIREGKEFLTKVWNISRFVLSFPEPQQKPQLAPVDRALLARLYDVAKKVITAYSEFDVYEPAHALYNFIWHEFADHYIELVKSRAYNREGVFTEEEQRAAIWTLYTAWRYSLKLLAPIMPFVTDKIWREAYGRSIHDEMIEDPPEEWKEGDQALFHLVKKINSAVWRYKNRRGMSLADRLDAVLYVSELAMQAAKDLKYMHKVSDVRPGRGAEQIDDEGLVWLG</sequence>
<name>SYV_PYRAE</name>
<dbReference type="EC" id="6.1.1.9"/>
<dbReference type="EMBL" id="AE009441">
    <property type="protein sequence ID" value="AAL64094.1"/>
    <property type="molecule type" value="Genomic_DNA"/>
</dbReference>
<dbReference type="RefSeq" id="WP_011008562.1">
    <property type="nucleotide sequence ID" value="NC_003364.1"/>
</dbReference>
<dbReference type="SMR" id="Q8ZVG2"/>
<dbReference type="FunCoup" id="Q8ZVG2">
    <property type="interactions" value="163"/>
</dbReference>
<dbReference type="STRING" id="178306.PAE2297"/>
<dbReference type="EnsemblBacteria" id="AAL64094">
    <property type="protein sequence ID" value="AAL64094"/>
    <property type="gene ID" value="PAE2297"/>
</dbReference>
<dbReference type="GeneID" id="1464430"/>
<dbReference type="KEGG" id="pai:PAE2297"/>
<dbReference type="PATRIC" id="fig|178306.9.peg.1710"/>
<dbReference type="eggNOG" id="arCOG00808">
    <property type="taxonomic scope" value="Archaea"/>
</dbReference>
<dbReference type="HOGENOM" id="CLU_001493_0_2_2"/>
<dbReference type="InParanoid" id="Q8ZVG2"/>
<dbReference type="Proteomes" id="UP000002439">
    <property type="component" value="Chromosome"/>
</dbReference>
<dbReference type="GO" id="GO:0005829">
    <property type="term" value="C:cytosol"/>
    <property type="evidence" value="ECO:0000318"/>
    <property type="project" value="GO_Central"/>
</dbReference>
<dbReference type="GO" id="GO:0002161">
    <property type="term" value="F:aminoacyl-tRNA deacylase activity"/>
    <property type="evidence" value="ECO:0007669"/>
    <property type="project" value="InterPro"/>
</dbReference>
<dbReference type="GO" id="GO:0005524">
    <property type="term" value="F:ATP binding"/>
    <property type="evidence" value="ECO:0007669"/>
    <property type="project" value="UniProtKB-KW"/>
</dbReference>
<dbReference type="GO" id="GO:0004832">
    <property type="term" value="F:valine-tRNA ligase activity"/>
    <property type="evidence" value="ECO:0000318"/>
    <property type="project" value="GO_Central"/>
</dbReference>
<dbReference type="GO" id="GO:0006438">
    <property type="term" value="P:valyl-tRNA aminoacylation"/>
    <property type="evidence" value="ECO:0000318"/>
    <property type="project" value="GO_Central"/>
</dbReference>
<dbReference type="CDD" id="cd07962">
    <property type="entry name" value="Anticodon_Ia_Val"/>
    <property type="match status" value="1"/>
</dbReference>
<dbReference type="FunFam" id="1.10.730.10:FF:000033">
    <property type="entry name" value="Valine--tRNA ligase"/>
    <property type="match status" value="1"/>
</dbReference>
<dbReference type="FunFam" id="3.40.50.620:FF:000192">
    <property type="entry name" value="Valine--tRNA ligase"/>
    <property type="match status" value="1"/>
</dbReference>
<dbReference type="FunFam" id="3.40.50.620:FF:000362">
    <property type="entry name" value="Valyl-tRNA synthetase"/>
    <property type="match status" value="1"/>
</dbReference>
<dbReference type="Gene3D" id="3.40.50.620">
    <property type="entry name" value="HUPs"/>
    <property type="match status" value="2"/>
</dbReference>
<dbReference type="Gene3D" id="1.10.730.10">
    <property type="entry name" value="Isoleucyl-tRNA Synthetase, Domain 1"/>
    <property type="match status" value="1"/>
</dbReference>
<dbReference type="InterPro" id="IPR002300">
    <property type="entry name" value="aa-tRNA-synth_Ia"/>
</dbReference>
<dbReference type="InterPro" id="IPR033705">
    <property type="entry name" value="Anticodon_Ia_Val"/>
</dbReference>
<dbReference type="InterPro" id="IPR013155">
    <property type="entry name" value="M/V/L/I-tRNA-synth_anticd-bd"/>
</dbReference>
<dbReference type="InterPro" id="IPR014729">
    <property type="entry name" value="Rossmann-like_a/b/a_fold"/>
</dbReference>
<dbReference type="InterPro" id="IPR009080">
    <property type="entry name" value="tRNAsynth_Ia_anticodon-bd"/>
</dbReference>
<dbReference type="InterPro" id="IPR009008">
    <property type="entry name" value="Val/Leu/Ile-tRNA-synth_edit"/>
</dbReference>
<dbReference type="InterPro" id="IPR002303">
    <property type="entry name" value="Valyl-tRNA_ligase"/>
</dbReference>
<dbReference type="NCBIfam" id="NF009687">
    <property type="entry name" value="PRK13208.1"/>
    <property type="match status" value="1"/>
</dbReference>
<dbReference type="PANTHER" id="PTHR11946:SF93">
    <property type="entry name" value="VALINE--TRNA LIGASE, CHLOROPLASTIC_MITOCHONDRIAL 2"/>
    <property type="match status" value="1"/>
</dbReference>
<dbReference type="PANTHER" id="PTHR11946">
    <property type="entry name" value="VALYL-TRNA SYNTHETASES"/>
    <property type="match status" value="1"/>
</dbReference>
<dbReference type="Pfam" id="PF08264">
    <property type="entry name" value="Anticodon_1"/>
    <property type="match status" value="1"/>
</dbReference>
<dbReference type="Pfam" id="PF00133">
    <property type="entry name" value="tRNA-synt_1"/>
    <property type="match status" value="1"/>
</dbReference>
<dbReference type="PRINTS" id="PR00986">
    <property type="entry name" value="TRNASYNTHVAL"/>
</dbReference>
<dbReference type="SUPFAM" id="SSF47323">
    <property type="entry name" value="Anticodon-binding domain of a subclass of class I aminoacyl-tRNA synthetases"/>
    <property type="match status" value="1"/>
</dbReference>
<dbReference type="SUPFAM" id="SSF52374">
    <property type="entry name" value="Nucleotidylyl transferase"/>
    <property type="match status" value="1"/>
</dbReference>
<dbReference type="SUPFAM" id="SSF50677">
    <property type="entry name" value="ValRS/IleRS/LeuRS editing domain"/>
    <property type="match status" value="1"/>
</dbReference>
<protein>
    <recommendedName>
        <fullName>Valine--tRNA ligase</fullName>
        <ecNumber>6.1.1.9</ecNumber>
    </recommendedName>
    <alternativeName>
        <fullName>Valyl-tRNA synthetase</fullName>
        <shortName>ValRS</shortName>
    </alternativeName>
</protein>
<feature type="chain" id="PRO_0000224631" description="Valine--tRNA ligase">
    <location>
        <begin position="1"/>
        <end position="799"/>
    </location>
</feature>
<feature type="binding site" evidence="1">
    <location>
        <position position="536"/>
    </location>
    <ligand>
        <name>ATP</name>
        <dbReference type="ChEBI" id="CHEBI:30616"/>
    </ligand>
</feature>
<accession>Q8ZVG2</accession>
<keyword id="KW-0030">Aminoacyl-tRNA synthetase</keyword>
<keyword id="KW-0067">ATP-binding</keyword>
<keyword id="KW-0963">Cytoplasm</keyword>
<keyword id="KW-0436">Ligase</keyword>
<keyword id="KW-0547">Nucleotide-binding</keyword>
<keyword id="KW-0648">Protein biosynthesis</keyword>
<keyword id="KW-1185">Reference proteome</keyword>
<proteinExistence type="inferred from homology"/>
<reference key="1">
    <citation type="journal article" date="2002" name="Proc. Natl. Acad. Sci. U.S.A.">
        <title>Genome sequence of the hyperthermophilic crenarchaeon Pyrobaculum aerophilum.</title>
        <authorList>
            <person name="Fitz-Gibbon S.T."/>
            <person name="Ladner H."/>
            <person name="Kim U.-J."/>
            <person name="Stetter K.O."/>
            <person name="Simon M.I."/>
            <person name="Miller J.H."/>
        </authorList>
    </citation>
    <scope>NUCLEOTIDE SEQUENCE [LARGE SCALE GENOMIC DNA]</scope>
    <source>
        <strain>ATCC 51768 / DSM 7523 / JCM 9630 / CIP 104966 / NBRC 100827 / IM2</strain>
    </source>
</reference>
<organism>
    <name type="scientific">Pyrobaculum aerophilum (strain ATCC 51768 / DSM 7523 / JCM 9630 / CIP 104966 / NBRC 100827 / IM2)</name>
    <dbReference type="NCBI Taxonomy" id="178306"/>
    <lineage>
        <taxon>Archaea</taxon>
        <taxon>Thermoproteota</taxon>
        <taxon>Thermoprotei</taxon>
        <taxon>Thermoproteales</taxon>
        <taxon>Thermoproteaceae</taxon>
        <taxon>Pyrobaculum</taxon>
    </lineage>
</organism>
<evidence type="ECO:0000250" key="1"/>
<evidence type="ECO:0000305" key="2"/>
<gene>
    <name type="primary">valS</name>
    <name type="ordered locus">PAE2297</name>
</gene>